<proteinExistence type="inferred from homology"/>
<feature type="chain" id="PRO_1000082507" description="tRNA (guanine-N(1)-)-methyltransferase">
    <location>
        <begin position="1"/>
        <end position="244"/>
    </location>
</feature>
<feature type="binding site" evidence="1">
    <location>
        <position position="120"/>
    </location>
    <ligand>
        <name>S-adenosyl-L-methionine</name>
        <dbReference type="ChEBI" id="CHEBI:59789"/>
    </ligand>
</feature>
<feature type="binding site" evidence="1">
    <location>
        <begin position="140"/>
        <end position="145"/>
    </location>
    <ligand>
        <name>S-adenosyl-L-methionine</name>
        <dbReference type="ChEBI" id="CHEBI:59789"/>
    </ligand>
</feature>
<dbReference type="EC" id="2.1.1.228" evidence="1"/>
<dbReference type="EMBL" id="CP000872">
    <property type="protein sequence ID" value="ABX62948.1"/>
    <property type="molecule type" value="Genomic_DNA"/>
</dbReference>
<dbReference type="RefSeq" id="WP_004691088.1">
    <property type="nucleotide sequence ID" value="NC_010103.1"/>
</dbReference>
<dbReference type="SMR" id="A9M8Q0"/>
<dbReference type="GeneID" id="55591505"/>
<dbReference type="KEGG" id="bcs:BCAN_A1958"/>
<dbReference type="HOGENOM" id="CLU_047363_0_1_5"/>
<dbReference type="PhylomeDB" id="A9M8Q0"/>
<dbReference type="Proteomes" id="UP000001385">
    <property type="component" value="Chromosome I"/>
</dbReference>
<dbReference type="GO" id="GO:0005829">
    <property type="term" value="C:cytosol"/>
    <property type="evidence" value="ECO:0007669"/>
    <property type="project" value="TreeGrafter"/>
</dbReference>
<dbReference type="GO" id="GO:0052906">
    <property type="term" value="F:tRNA (guanine(37)-N1)-methyltransferase activity"/>
    <property type="evidence" value="ECO:0007669"/>
    <property type="project" value="UniProtKB-UniRule"/>
</dbReference>
<dbReference type="GO" id="GO:0002939">
    <property type="term" value="P:tRNA N1-guanine methylation"/>
    <property type="evidence" value="ECO:0007669"/>
    <property type="project" value="TreeGrafter"/>
</dbReference>
<dbReference type="CDD" id="cd18080">
    <property type="entry name" value="TrmD-like"/>
    <property type="match status" value="1"/>
</dbReference>
<dbReference type="Gene3D" id="3.40.1280.10">
    <property type="match status" value="1"/>
</dbReference>
<dbReference type="Gene3D" id="1.10.1270.20">
    <property type="entry name" value="tRNA(m1g37)methyltransferase, domain 2"/>
    <property type="match status" value="1"/>
</dbReference>
<dbReference type="HAMAP" id="MF_00605">
    <property type="entry name" value="TrmD"/>
    <property type="match status" value="1"/>
</dbReference>
<dbReference type="InterPro" id="IPR029028">
    <property type="entry name" value="Alpha/beta_knot_MTases"/>
</dbReference>
<dbReference type="InterPro" id="IPR023148">
    <property type="entry name" value="tRNA_m1G_MeTrfase_C_sf"/>
</dbReference>
<dbReference type="InterPro" id="IPR002649">
    <property type="entry name" value="tRNA_m1G_MeTrfase_TrmD"/>
</dbReference>
<dbReference type="InterPro" id="IPR029026">
    <property type="entry name" value="tRNA_m1G_MTases_N"/>
</dbReference>
<dbReference type="InterPro" id="IPR016009">
    <property type="entry name" value="tRNA_MeTrfase_TRMD/TRM10"/>
</dbReference>
<dbReference type="NCBIfam" id="NF000648">
    <property type="entry name" value="PRK00026.1"/>
    <property type="match status" value="1"/>
</dbReference>
<dbReference type="NCBIfam" id="TIGR00088">
    <property type="entry name" value="trmD"/>
    <property type="match status" value="1"/>
</dbReference>
<dbReference type="PANTHER" id="PTHR46417">
    <property type="entry name" value="TRNA (GUANINE-N(1)-)-METHYLTRANSFERASE"/>
    <property type="match status" value="1"/>
</dbReference>
<dbReference type="PANTHER" id="PTHR46417:SF1">
    <property type="entry name" value="TRNA (GUANINE-N(1)-)-METHYLTRANSFERASE"/>
    <property type="match status" value="1"/>
</dbReference>
<dbReference type="Pfam" id="PF01746">
    <property type="entry name" value="tRNA_m1G_MT"/>
    <property type="match status" value="1"/>
</dbReference>
<dbReference type="PIRSF" id="PIRSF000386">
    <property type="entry name" value="tRNA_mtase"/>
    <property type="match status" value="1"/>
</dbReference>
<dbReference type="SUPFAM" id="SSF75217">
    <property type="entry name" value="alpha/beta knot"/>
    <property type="match status" value="1"/>
</dbReference>
<protein>
    <recommendedName>
        <fullName evidence="1">tRNA (guanine-N(1)-)-methyltransferase</fullName>
        <ecNumber evidence="1">2.1.1.228</ecNumber>
    </recommendedName>
    <alternativeName>
        <fullName evidence="1">M1G-methyltransferase</fullName>
    </alternativeName>
    <alternativeName>
        <fullName evidence="1">tRNA [GM37] methyltransferase</fullName>
    </alternativeName>
</protein>
<name>TRMD_BRUC2</name>
<comment type="function">
    <text evidence="1">Specifically methylates guanosine-37 in various tRNAs.</text>
</comment>
<comment type="catalytic activity">
    <reaction evidence="1">
        <text>guanosine(37) in tRNA + S-adenosyl-L-methionine = N(1)-methylguanosine(37) in tRNA + S-adenosyl-L-homocysteine + H(+)</text>
        <dbReference type="Rhea" id="RHEA:36899"/>
        <dbReference type="Rhea" id="RHEA-COMP:10145"/>
        <dbReference type="Rhea" id="RHEA-COMP:10147"/>
        <dbReference type="ChEBI" id="CHEBI:15378"/>
        <dbReference type="ChEBI" id="CHEBI:57856"/>
        <dbReference type="ChEBI" id="CHEBI:59789"/>
        <dbReference type="ChEBI" id="CHEBI:73542"/>
        <dbReference type="ChEBI" id="CHEBI:74269"/>
        <dbReference type="EC" id="2.1.1.228"/>
    </reaction>
</comment>
<comment type="subunit">
    <text evidence="1">Homodimer.</text>
</comment>
<comment type="subcellular location">
    <subcellularLocation>
        <location evidence="1">Cytoplasm</location>
    </subcellularLocation>
</comment>
<comment type="similarity">
    <text evidence="1">Belongs to the RNA methyltransferase TrmD family.</text>
</comment>
<accession>A9M8Q0</accession>
<sequence length="244" mass="26808">MTDLPEKEGGRFHASVLTLYPEMFPGPLGISLAGKALAEGKWQLDTVQIRDFAEGRHRMVDDTPSGGGAGMVMKADVVARALDSVDDGRPMLLMTPRGKPLTQERVRALADGAGAIILCGHFEGVDERVIEGRNLEEISIGDYILSGGETAAIVLLDAVVRLLPGVMGNRESGETESFETGLLEHPHYTRPQEWEGRAIPDILTSGNHGAIDKWRLEQAERITRERRPDLWEAYCKNRRKIGGQ</sequence>
<evidence type="ECO:0000255" key="1">
    <source>
        <dbReference type="HAMAP-Rule" id="MF_00605"/>
    </source>
</evidence>
<gene>
    <name evidence="1" type="primary">trmD</name>
    <name type="ordered locus">BCAN_A1958</name>
</gene>
<keyword id="KW-0963">Cytoplasm</keyword>
<keyword id="KW-0489">Methyltransferase</keyword>
<keyword id="KW-1185">Reference proteome</keyword>
<keyword id="KW-0949">S-adenosyl-L-methionine</keyword>
<keyword id="KW-0808">Transferase</keyword>
<keyword id="KW-0819">tRNA processing</keyword>
<organism>
    <name type="scientific">Brucella canis (strain ATCC 23365 / NCTC 10854 / RM-666)</name>
    <dbReference type="NCBI Taxonomy" id="483179"/>
    <lineage>
        <taxon>Bacteria</taxon>
        <taxon>Pseudomonadati</taxon>
        <taxon>Pseudomonadota</taxon>
        <taxon>Alphaproteobacteria</taxon>
        <taxon>Hyphomicrobiales</taxon>
        <taxon>Brucellaceae</taxon>
        <taxon>Brucella/Ochrobactrum group</taxon>
        <taxon>Brucella</taxon>
    </lineage>
</organism>
<reference key="1">
    <citation type="submission" date="2007-10" db="EMBL/GenBank/DDBJ databases">
        <title>Brucella canis ATCC 23365 whole genome shotgun sequencing project.</title>
        <authorList>
            <person name="Setubal J.C."/>
            <person name="Bowns C."/>
            <person name="Boyle S."/>
            <person name="Crasta O.R."/>
            <person name="Czar M.J."/>
            <person name="Dharmanolla C."/>
            <person name="Gillespie J.J."/>
            <person name="Kenyon R.W."/>
            <person name="Lu J."/>
            <person name="Mane S."/>
            <person name="Mohapatra S."/>
            <person name="Nagrani S."/>
            <person name="Purkayastha A."/>
            <person name="Rajasimha H.K."/>
            <person name="Shallom J.M."/>
            <person name="Shallom S."/>
            <person name="Shukla M."/>
            <person name="Snyder E.E."/>
            <person name="Sobral B.W."/>
            <person name="Wattam A.R."/>
            <person name="Will R."/>
            <person name="Williams K."/>
            <person name="Yoo H."/>
            <person name="Bruce D."/>
            <person name="Detter C."/>
            <person name="Munk C."/>
            <person name="Brettin T.S."/>
        </authorList>
    </citation>
    <scope>NUCLEOTIDE SEQUENCE [LARGE SCALE GENOMIC DNA]</scope>
    <source>
        <strain>ATCC 23365 / NCTC 10854 / RM-666</strain>
    </source>
</reference>